<feature type="chain" id="PRO_0000138561" description="Peptide methionine sulfoxide reductase MsrA">
    <location>
        <begin position="1"/>
        <end position="182"/>
    </location>
</feature>
<feature type="active site" evidence="1">
    <location>
        <position position="13"/>
    </location>
</feature>
<organism>
    <name type="scientific">Mycobacterium bovis (strain ATCC BAA-935 / AF2122/97)</name>
    <dbReference type="NCBI Taxonomy" id="233413"/>
    <lineage>
        <taxon>Bacteria</taxon>
        <taxon>Bacillati</taxon>
        <taxon>Actinomycetota</taxon>
        <taxon>Actinomycetes</taxon>
        <taxon>Mycobacteriales</taxon>
        <taxon>Mycobacteriaceae</taxon>
        <taxon>Mycobacterium</taxon>
        <taxon>Mycobacterium tuberculosis complex</taxon>
    </lineage>
</organism>
<proteinExistence type="inferred from homology"/>
<comment type="function">
    <text evidence="1">Has an important function as a repair enzyme for proteins that have been inactivated by oxidation. Catalyzes the reversible oxidation-reduction of methionine sulfoxide in proteins to methionine.</text>
</comment>
<comment type="catalytic activity">
    <reaction evidence="1">
        <text>L-methionyl-[protein] + [thioredoxin]-disulfide + H2O = L-methionyl-(S)-S-oxide-[protein] + [thioredoxin]-dithiol</text>
        <dbReference type="Rhea" id="RHEA:14217"/>
        <dbReference type="Rhea" id="RHEA-COMP:10698"/>
        <dbReference type="Rhea" id="RHEA-COMP:10700"/>
        <dbReference type="Rhea" id="RHEA-COMP:12313"/>
        <dbReference type="Rhea" id="RHEA-COMP:12315"/>
        <dbReference type="ChEBI" id="CHEBI:15377"/>
        <dbReference type="ChEBI" id="CHEBI:16044"/>
        <dbReference type="ChEBI" id="CHEBI:29950"/>
        <dbReference type="ChEBI" id="CHEBI:44120"/>
        <dbReference type="ChEBI" id="CHEBI:50058"/>
        <dbReference type="EC" id="1.8.4.11"/>
    </reaction>
</comment>
<comment type="catalytic activity">
    <reaction evidence="1">
        <text>[thioredoxin]-disulfide + L-methionine + H2O = L-methionine (S)-S-oxide + [thioredoxin]-dithiol</text>
        <dbReference type="Rhea" id="RHEA:19993"/>
        <dbReference type="Rhea" id="RHEA-COMP:10698"/>
        <dbReference type="Rhea" id="RHEA-COMP:10700"/>
        <dbReference type="ChEBI" id="CHEBI:15377"/>
        <dbReference type="ChEBI" id="CHEBI:29950"/>
        <dbReference type="ChEBI" id="CHEBI:50058"/>
        <dbReference type="ChEBI" id="CHEBI:57844"/>
        <dbReference type="ChEBI" id="CHEBI:58772"/>
        <dbReference type="EC" id="1.8.4.11"/>
    </reaction>
</comment>
<comment type="similarity">
    <text evidence="1">Belongs to the MsrA Met sulfoxide reductase family.</text>
</comment>
<accession>P0A5L1</accession>
<accession>A0A1R3XUE8</accession>
<accession>P96814</accession>
<accession>X2BE48</accession>
<sequence length="182" mass="20485">MTSNQKAILAGGCFWGLQDLIRNQPGVVSTRVGYSGGNIPNATYRNHGTHAEAVEIIFDPTVTDYRTLLEFFFQIHDPTTKDRQGNDRGTSYRSAIFYFDEQQKRIALDTIADVEASGLWPGKVVTEVSPAGDFWEAEPEHQDYLQRYPNGYTCHFVRPGWRLPRRTAESALRASLSPELGT</sequence>
<gene>
    <name evidence="1" type="primary">msrA</name>
    <name type="ordered locus">BQ2027_MB0142C</name>
</gene>
<keyword id="KW-0560">Oxidoreductase</keyword>
<keyword id="KW-1185">Reference proteome</keyword>
<name>MSRA_MYCBO</name>
<reference key="1">
    <citation type="journal article" date="2003" name="Proc. Natl. Acad. Sci. U.S.A.">
        <title>The complete genome sequence of Mycobacterium bovis.</title>
        <authorList>
            <person name="Garnier T."/>
            <person name="Eiglmeier K."/>
            <person name="Camus J.-C."/>
            <person name="Medina N."/>
            <person name="Mansoor H."/>
            <person name="Pryor M."/>
            <person name="Duthoy S."/>
            <person name="Grondin S."/>
            <person name="Lacroix C."/>
            <person name="Monsempe C."/>
            <person name="Simon S."/>
            <person name="Harris B."/>
            <person name="Atkin R."/>
            <person name="Doggett J."/>
            <person name="Mayes R."/>
            <person name="Keating L."/>
            <person name="Wheeler P.R."/>
            <person name="Parkhill J."/>
            <person name="Barrell B.G."/>
            <person name="Cole S.T."/>
            <person name="Gordon S.V."/>
            <person name="Hewinson R.G."/>
        </authorList>
    </citation>
    <scope>NUCLEOTIDE SEQUENCE [LARGE SCALE GENOMIC DNA]</scope>
    <source>
        <strain>ATCC BAA-935 / AF2122/97</strain>
    </source>
</reference>
<reference key="2">
    <citation type="journal article" date="2017" name="Genome Announc.">
        <title>Updated reference genome sequence and annotation of Mycobacterium bovis AF2122/97.</title>
        <authorList>
            <person name="Malone K.M."/>
            <person name="Farrell D."/>
            <person name="Stuber T.P."/>
            <person name="Schubert O.T."/>
            <person name="Aebersold R."/>
            <person name="Robbe-Austerman S."/>
            <person name="Gordon S.V."/>
        </authorList>
    </citation>
    <scope>NUCLEOTIDE SEQUENCE [LARGE SCALE GENOMIC DNA]</scope>
    <scope>GENOME REANNOTATION</scope>
    <source>
        <strain>ATCC BAA-935 / AF2122/97</strain>
    </source>
</reference>
<evidence type="ECO:0000255" key="1">
    <source>
        <dbReference type="HAMAP-Rule" id="MF_01401"/>
    </source>
</evidence>
<dbReference type="EC" id="1.8.4.11" evidence="1"/>
<dbReference type="EMBL" id="LT708304">
    <property type="protein sequence ID" value="SIT98576.1"/>
    <property type="molecule type" value="Genomic_DNA"/>
</dbReference>
<dbReference type="RefSeq" id="NP_853808.1">
    <property type="nucleotide sequence ID" value="NC_002945.3"/>
</dbReference>
<dbReference type="RefSeq" id="WP_003400942.1">
    <property type="nucleotide sequence ID" value="NC_002945.4"/>
</dbReference>
<dbReference type="SMR" id="P0A5L1"/>
<dbReference type="GeneID" id="45424103"/>
<dbReference type="PATRIC" id="fig|233413.5.peg.163"/>
<dbReference type="Proteomes" id="UP000001419">
    <property type="component" value="Chromosome"/>
</dbReference>
<dbReference type="GO" id="GO:0033744">
    <property type="term" value="F:L-methionine:thioredoxin-disulfide S-oxidoreductase activity"/>
    <property type="evidence" value="ECO:0007669"/>
    <property type="project" value="RHEA"/>
</dbReference>
<dbReference type="GO" id="GO:0008113">
    <property type="term" value="F:peptide-methionine (S)-S-oxide reductase activity"/>
    <property type="evidence" value="ECO:0007669"/>
    <property type="project" value="UniProtKB-UniRule"/>
</dbReference>
<dbReference type="GO" id="GO:0036211">
    <property type="term" value="P:protein modification process"/>
    <property type="evidence" value="ECO:0007669"/>
    <property type="project" value="UniProtKB-UniRule"/>
</dbReference>
<dbReference type="FunFam" id="3.30.1060.10:FF:000005">
    <property type="entry name" value="Peptide methionine sulfoxide reductase MsrA"/>
    <property type="match status" value="1"/>
</dbReference>
<dbReference type="Gene3D" id="3.30.1060.10">
    <property type="entry name" value="Peptide methionine sulphoxide reductase MsrA"/>
    <property type="match status" value="1"/>
</dbReference>
<dbReference type="HAMAP" id="MF_01401">
    <property type="entry name" value="MsrA"/>
    <property type="match status" value="1"/>
</dbReference>
<dbReference type="InterPro" id="IPR002569">
    <property type="entry name" value="Met_Sox_Rdtase_MsrA_dom"/>
</dbReference>
<dbReference type="InterPro" id="IPR036509">
    <property type="entry name" value="Met_Sox_Rdtase_MsrA_sf"/>
</dbReference>
<dbReference type="NCBIfam" id="TIGR00401">
    <property type="entry name" value="msrA"/>
    <property type="match status" value="1"/>
</dbReference>
<dbReference type="PANTHER" id="PTHR43774">
    <property type="entry name" value="PEPTIDE METHIONINE SULFOXIDE REDUCTASE"/>
    <property type="match status" value="1"/>
</dbReference>
<dbReference type="PANTHER" id="PTHR43774:SF1">
    <property type="entry name" value="PEPTIDE METHIONINE SULFOXIDE REDUCTASE MSRA 2"/>
    <property type="match status" value="1"/>
</dbReference>
<dbReference type="Pfam" id="PF01625">
    <property type="entry name" value="PMSR"/>
    <property type="match status" value="1"/>
</dbReference>
<dbReference type="SUPFAM" id="SSF55068">
    <property type="entry name" value="Peptide methionine sulfoxide reductase"/>
    <property type="match status" value="1"/>
</dbReference>
<protein>
    <recommendedName>
        <fullName evidence="1">Peptide methionine sulfoxide reductase MsrA</fullName>
        <shortName evidence="1">Protein-methionine-S-oxide reductase</shortName>
        <ecNumber evidence="1">1.8.4.11</ecNumber>
    </recommendedName>
    <alternativeName>
        <fullName evidence="1">Peptide-methionine (S)-S-oxide reductase</fullName>
        <shortName evidence="1">Peptide Met(O) reductase</shortName>
    </alternativeName>
</protein>